<feature type="chain" id="PRO_1000001854" description="Phosphate acyltransferase">
    <location>
        <begin position="1"/>
        <end position="326"/>
    </location>
</feature>
<comment type="function">
    <text evidence="1">Catalyzes the reversible formation of acyl-phosphate (acyl-PO(4)) from acyl-[acyl-carrier-protein] (acyl-ACP). This enzyme utilizes acyl-ACP as fatty acyl donor, but not acyl-CoA.</text>
</comment>
<comment type="catalytic activity">
    <reaction evidence="1">
        <text>a fatty acyl-[ACP] + phosphate = an acyl phosphate + holo-[ACP]</text>
        <dbReference type="Rhea" id="RHEA:42292"/>
        <dbReference type="Rhea" id="RHEA-COMP:9685"/>
        <dbReference type="Rhea" id="RHEA-COMP:14125"/>
        <dbReference type="ChEBI" id="CHEBI:43474"/>
        <dbReference type="ChEBI" id="CHEBI:59918"/>
        <dbReference type="ChEBI" id="CHEBI:64479"/>
        <dbReference type="ChEBI" id="CHEBI:138651"/>
        <dbReference type="EC" id="2.3.1.274"/>
    </reaction>
</comment>
<comment type="pathway">
    <text evidence="1">Lipid metabolism; phospholipid metabolism.</text>
</comment>
<comment type="subunit">
    <text evidence="1">Homodimer. Probably interacts with PlsY.</text>
</comment>
<comment type="subcellular location">
    <subcellularLocation>
        <location evidence="1">Cytoplasm</location>
    </subcellularLocation>
    <text evidence="1">Associated with the membrane possibly through PlsY.</text>
</comment>
<comment type="similarity">
    <text evidence="1">Belongs to the PlsX family.</text>
</comment>
<evidence type="ECO:0000255" key="1">
    <source>
        <dbReference type="HAMAP-Rule" id="MF_00019"/>
    </source>
</evidence>
<sequence length="326" mass="34345">MRIALDAMGGDRAPQVVVAGAAAAAREGVEVLLVGDEAQVRAELARLGADLPVWHAPDHIRMEEAATEVRRRPQASVRVAMELLKRGEVQAVVSMGHSGATLAAALLVLGRVKGVERPALLVEFPSLRGRTFLLDGGANADCRPSFLVQFAAMGLAYAEASGALAPRVGLLSIGEEEGKGNALVQEAYPLLRAALGERFYGNVEGRDIFLGTTEVVVTDGFTGNVALKLAEGEARVLLTWIKEALTSSFRARLGALLVREALARVKARVDPAQYGAMPLLGVEGAVFIGHGSADALAVKNALLRAKAMVEAGLLARVRQRLSALHV</sequence>
<keyword id="KW-0963">Cytoplasm</keyword>
<keyword id="KW-0444">Lipid biosynthesis</keyword>
<keyword id="KW-0443">Lipid metabolism</keyword>
<keyword id="KW-0594">Phospholipid biosynthesis</keyword>
<keyword id="KW-1208">Phospholipid metabolism</keyword>
<keyword id="KW-1185">Reference proteome</keyword>
<keyword id="KW-0808">Transferase</keyword>
<dbReference type="EC" id="2.3.1.274" evidence="1"/>
<dbReference type="EMBL" id="AP008226">
    <property type="protein sequence ID" value="BAD71569.1"/>
    <property type="molecule type" value="Genomic_DNA"/>
</dbReference>
<dbReference type="RefSeq" id="WP_011173767.1">
    <property type="nucleotide sequence ID" value="NC_006461.1"/>
</dbReference>
<dbReference type="RefSeq" id="YP_145012.1">
    <property type="nucleotide sequence ID" value="NC_006461.1"/>
</dbReference>
<dbReference type="SMR" id="Q5SHI4"/>
<dbReference type="EnsemblBacteria" id="BAD71569">
    <property type="protein sequence ID" value="BAD71569"/>
    <property type="gene ID" value="BAD71569"/>
</dbReference>
<dbReference type="GeneID" id="3170104"/>
<dbReference type="KEGG" id="ttj:TTHA1746"/>
<dbReference type="PATRIC" id="fig|300852.9.peg.1717"/>
<dbReference type="eggNOG" id="COG0416">
    <property type="taxonomic scope" value="Bacteria"/>
</dbReference>
<dbReference type="HOGENOM" id="CLU_039379_1_1_0"/>
<dbReference type="PhylomeDB" id="Q5SHI4"/>
<dbReference type="UniPathway" id="UPA00085"/>
<dbReference type="Proteomes" id="UP000000532">
    <property type="component" value="Chromosome"/>
</dbReference>
<dbReference type="GO" id="GO:0005737">
    <property type="term" value="C:cytoplasm"/>
    <property type="evidence" value="ECO:0007669"/>
    <property type="project" value="UniProtKB-SubCell"/>
</dbReference>
<dbReference type="GO" id="GO:0043811">
    <property type="term" value="F:phosphate:acyl-[acyl carrier protein] acyltransferase activity"/>
    <property type="evidence" value="ECO:0007669"/>
    <property type="project" value="UniProtKB-UniRule"/>
</dbReference>
<dbReference type="GO" id="GO:0006633">
    <property type="term" value="P:fatty acid biosynthetic process"/>
    <property type="evidence" value="ECO:0007669"/>
    <property type="project" value="UniProtKB-UniRule"/>
</dbReference>
<dbReference type="GO" id="GO:0008654">
    <property type="term" value="P:phospholipid biosynthetic process"/>
    <property type="evidence" value="ECO:0007669"/>
    <property type="project" value="UniProtKB-KW"/>
</dbReference>
<dbReference type="Gene3D" id="3.40.718.10">
    <property type="entry name" value="Isopropylmalate Dehydrogenase"/>
    <property type="match status" value="1"/>
</dbReference>
<dbReference type="HAMAP" id="MF_00019">
    <property type="entry name" value="PlsX"/>
    <property type="match status" value="1"/>
</dbReference>
<dbReference type="InterPro" id="IPR003664">
    <property type="entry name" value="FA_synthesis"/>
</dbReference>
<dbReference type="InterPro" id="IPR012281">
    <property type="entry name" value="Phospholipid_synth_PlsX-like"/>
</dbReference>
<dbReference type="NCBIfam" id="TIGR00182">
    <property type="entry name" value="plsX"/>
    <property type="match status" value="1"/>
</dbReference>
<dbReference type="PANTHER" id="PTHR30100">
    <property type="entry name" value="FATTY ACID/PHOSPHOLIPID SYNTHESIS PROTEIN PLSX"/>
    <property type="match status" value="1"/>
</dbReference>
<dbReference type="PANTHER" id="PTHR30100:SF1">
    <property type="entry name" value="PHOSPHATE ACYLTRANSFERASE"/>
    <property type="match status" value="1"/>
</dbReference>
<dbReference type="Pfam" id="PF02504">
    <property type="entry name" value="FA_synthesis"/>
    <property type="match status" value="1"/>
</dbReference>
<dbReference type="PIRSF" id="PIRSF002465">
    <property type="entry name" value="Phsphlp_syn_PlsX"/>
    <property type="match status" value="1"/>
</dbReference>
<dbReference type="SUPFAM" id="SSF53659">
    <property type="entry name" value="Isocitrate/Isopropylmalate dehydrogenase-like"/>
    <property type="match status" value="1"/>
</dbReference>
<proteinExistence type="inferred from homology"/>
<reference key="1">
    <citation type="submission" date="2004-11" db="EMBL/GenBank/DDBJ databases">
        <title>Complete genome sequence of Thermus thermophilus HB8.</title>
        <authorList>
            <person name="Masui R."/>
            <person name="Kurokawa K."/>
            <person name="Nakagawa N."/>
            <person name="Tokunaga F."/>
            <person name="Koyama Y."/>
            <person name="Shibata T."/>
            <person name="Oshima T."/>
            <person name="Yokoyama S."/>
            <person name="Yasunaga T."/>
            <person name="Kuramitsu S."/>
        </authorList>
    </citation>
    <scope>NUCLEOTIDE SEQUENCE [LARGE SCALE GENOMIC DNA]</scope>
    <source>
        <strain>ATCC 27634 / DSM 579 / HB8</strain>
    </source>
</reference>
<organism>
    <name type="scientific">Thermus thermophilus (strain ATCC 27634 / DSM 579 / HB8)</name>
    <dbReference type="NCBI Taxonomy" id="300852"/>
    <lineage>
        <taxon>Bacteria</taxon>
        <taxon>Thermotogati</taxon>
        <taxon>Deinococcota</taxon>
        <taxon>Deinococci</taxon>
        <taxon>Thermales</taxon>
        <taxon>Thermaceae</taxon>
        <taxon>Thermus</taxon>
    </lineage>
</organism>
<gene>
    <name evidence="1" type="primary">plsX</name>
    <name type="ordered locus">TTHA1746</name>
</gene>
<accession>Q5SHI4</accession>
<name>PLSX_THET8</name>
<protein>
    <recommendedName>
        <fullName evidence="1">Phosphate acyltransferase</fullName>
        <ecNumber evidence="1">2.3.1.274</ecNumber>
    </recommendedName>
    <alternativeName>
        <fullName evidence="1">Acyl-ACP phosphotransacylase</fullName>
    </alternativeName>
    <alternativeName>
        <fullName evidence="1">Acyl-[acyl-carrier-protein]--phosphate acyltransferase</fullName>
    </alternativeName>
    <alternativeName>
        <fullName evidence="1">Phosphate-acyl-ACP acyltransferase</fullName>
    </alternativeName>
</protein>